<gene>
    <name type="ordered locus">xcc-b100_1273</name>
</gene>
<organism>
    <name type="scientific">Xanthomonas campestris pv. campestris (strain B100)</name>
    <dbReference type="NCBI Taxonomy" id="509169"/>
    <lineage>
        <taxon>Bacteria</taxon>
        <taxon>Pseudomonadati</taxon>
        <taxon>Pseudomonadota</taxon>
        <taxon>Gammaproteobacteria</taxon>
        <taxon>Lysobacterales</taxon>
        <taxon>Lysobacteraceae</taxon>
        <taxon>Xanthomonas</taxon>
    </lineage>
</organism>
<name>Y1273_XANCB</name>
<accession>B0RQ88</accession>
<keyword id="KW-0997">Cell inner membrane</keyword>
<keyword id="KW-1003">Cell membrane</keyword>
<keyword id="KW-0472">Membrane</keyword>
<keyword id="KW-0812">Transmembrane</keyword>
<keyword id="KW-1133">Transmembrane helix</keyword>
<protein>
    <recommendedName>
        <fullName evidence="1">UPF0060 membrane protein xcc-b100_1273</fullName>
    </recommendedName>
</protein>
<proteinExistence type="inferred from homology"/>
<reference key="1">
    <citation type="journal article" date="2008" name="J. Biotechnol.">
        <title>The genome of Xanthomonas campestris pv. campestris B100 and its use for the reconstruction of metabolic pathways involved in xanthan biosynthesis.</title>
        <authorList>
            <person name="Vorhoelter F.-J."/>
            <person name="Schneiker S."/>
            <person name="Goesmann A."/>
            <person name="Krause L."/>
            <person name="Bekel T."/>
            <person name="Kaiser O."/>
            <person name="Linke B."/>
            <person name="Patschkowski T."/>
            <person name="Rueckert C."/>
            <person name="Schmid J."/>
            <person name="Sidhu V.K."/>
            <person name="Sieber V."/>
            <person name="Tauch A."/>
            <person name="Watt S.A."/>
            <person name="Weisshaar B."/>
            <person name="Becker A."/>
            <person name="Niehaus K."/>
            <person name="Puehler A."/>
        </authorList>
    </citation>
    <scope>NUCLEOTIDE SEQUENCE [LARGE SCALE GENOMIC DNA]</scope>
    <source>
        <strain>B100</strain>
    </source>
</reference>
<dbReference type="EMBL" id="AM920689">
    <property type="protein sequence ID" value="CAP50623.1"/>
    <property type="molecule type" value="Genomic_DNA"/>
</dbReference>
<dbReference type="SMR" id="B0RQ88"/>
<dbReference type="KEGG" id="xca:xcc-b100_1273"/>
<dbReference type="HOGENOM" id="CLU_117653_2_0_6"/>
<dbReference type="Proteomes" id="UP000001188">
    <property type="component" value="Chromosome"/>
</dbReference>
<dbReference type="GO" id="GO:0005886">
    <property type="term" value="C:plasma membrane"/>
    <property type="evidence" value="ECO:0007669"/>
    <property type="project" value="UniProtKB-SubCell"/>
</dbReference>
<dbReference type="HAMAP" id="MF_00010">
    <property type="entry name" value="UPF0060"/>
    <property type="match status" value="1"/>
</dbReference>
<dbReference type="InterPro" id="IPR003844">
    <property type="entry name" value="UPF0060"/>
</dbReference>
<dbReference type="NCBIfam" id="NF002586">
    <property type="entry name" value="PRK02237.1"/>
    <property type="match status" value="1"/>
</dbReference>
<dbReference type="PANTHER" id="PTHR36116">
    <property type="entry name" value="UPF0060 MEMBRANE PROTEIN YNFA"/>
    <property type="match status" value="1"/>
</dbReference>
<dbReference type="PANTHER" id="PTHR36116:SF1">
    <property type="entry name" value="UPF0060 MEMBRANE PROTEIN YNFA"/>
    <property type="match status" value="1"/>
</dbReference>
<dbReference type="Pfam" id="PF02694">
    <property type="entry name" value="UPF0060"/>
    <property type="match status" value="1"/>
</dbReference>
<dbReference type="SUPFAM" id="SSF103481">
    <property type="entry name" value="Multidrug resistance efflux transporter EmrE"/>
    <property type="match status" value="1"/>
</dbReference>
<evidence type="ECO:0000255" key="1">
    <source>
        <dbReference type="HAMAP-Rule" id="MF_00010"/>
    </source>
</evidence>
<sequence>MSAALTTLLLFVATAVAELVGCYLPYLWLRKGGSVWLLLPAALSLAVFVWLLTLHPAASGRVYAAYGGVYIATALLWLWWVDRVTPTRWDLLGAGCCLLGMAIIMFSPRSG</sequence>
<comment type="subcellular location">
    <subcellularLocation>
        <location evidence="1">Cell inner membrane</location>
        <topology evidence="1">Multi-pass membrane protein</topology>
    </subcellularLocation>
</comment>
<comment type="similarity">
    <text evidence="1">Belongs to the UPF0060 family.</text>
</comment>
<feature type="chain" id="PRO_1000089262" description="UPF0060 membrane protein xcc-b100_1273">
    <location>
        <begin position="1"/>
        <end position="111"/>
    </location>
</feature>
<feature type="transmembrane region" description="Helical" evidence="1">
    <location>
        <begin position="8"/>
        <end position="28"/>
    </location>
</feature>
<feature type="transmembrane region" description="Helical" evidence="1">
    <location>
        <begin position="34"/>
        <end position="54"/>
    </location>
</feature>
<feature type="transmembrane region" description="Helical" evidence="1">
    <location>
        <begin position="62"/>
        <end position="82"/>
    </location>
</feature>
<feature type="transmembrane region" description="Helical" evidence="1">
    <location>
        <begin position="91"/>
        <end position="111"/>
    </location>
</feature>